<organism>
    <name type="scientific">Neosartorya fischeri (strain ATCC 1020 / DSM 3700 / CBS 544.65 / FGSC A1164 / JCM 1740 / NRRL 181 / WB 181)</name>
    <name type="common">Aspergillus fischerianus</name>
    <dbReference type="NCBI Taxonomy" id="331117"/>
    <lineage>
        <taxon>Eukaryota</taxon>
        <taxon>Fungi</taxon>
        <taxon>Dikarya</taxon>
        <taxon>Ascomycota</taxon>
        <taxon>Pezizomycotina</taxon>
        <taxon>Eurotiomycetes</taxon>
        <taxon>Eurotiomycetidae</taxon>
        <taxon>Eurotiales</taxon>
        <taxon>Aspergillaceae</taxon>
        <taxon>Aspergillus</taxon>
        <taxon>Aspergillus subgen. Fumigati</taxon>
    </lineage>
</organism>
<protein>
    <recommendedName>
        <fullName>Protein sip5</fullName>
    </recommendedName>
</protein>
<keyword id="KW-0963">Cytoplasm</keyword>
<keyword id="KW-1185">Reference proteome</keyword>
<reference key="1">
    <citation type="journal article" date="2008" name="PLoS Genet.">
        <title>Genomic islands in the pathogenic filamentous fungus Aspergillus fumigatus.</title>
        <authorList>
            <person name="Fedorova N.D."/>
            <person name="Khaldi N."/>
            <person name="Joardar V.S."/>
            <person name="Maiti R."/>
            <person name="Amedeo P."/>
            <person name="Anderson M.J."/>
            <person name="Crabtree J."/>
            <person name="Silva J.C."/>
            <person name="Badger J.H."/>
            <person name="Albarraq A."/>
            <person name="Angiuoli S."/>
            <person name="Bussey H."/>
            <person name="Bowyer P."/>
            <person name="Cotty P.J."/>
            <person name="Dyer P.S."/>
            <person name="Egan A."/>
            <person name="Galens K."/>
            <person name="Fraser-Liggett C.M."/>
            <person name="Haas B.J."/>
            <person name="Inman J.M."/>
            <person name="Kent R."/>
            <person name="Lemieux S."/>
            <person name="Malavazi I."/>
            <person name="Orvis J."/>
            <person name="Roemer T."/>
            <person name="Ronning C.M."/>
            <person name="Sundaram J.P."/>
            <person name="Sutton G."/>
            <person name="Turner G."/>
            <person name="Venter J.C."/>
            <person name="White O.R."/>
            <person name="Whitty B.R."/>
            <person name="Youngman P."/>
            <person name="Wolfe K.H."/>
            <person name="Goldman G.H."/>
            <person name="Wortman J.R."/>
            <person name="Jiang B."/>
            <person name="Denning D.W."/>
            <person name="Nierman W.C."/>
        </authorList>
    </citation>
    <scope>NUCLEOTIDE SEQUENCE [LARGE SCALE GENOMIC DNA]</scope>
    <source>
        <strain>ATCC 1020 / DSM 3700 / CBS 544.65 / FGSC A1164 / JCM 1740 / NRRL 181 / WB 181</strain>
    </source>
</reference>
<feature type="chain" id="PRO_0000333438" description="Protein sip5">
    <location>
        <begin position="1"/>
        <end position="812"/>
    </location>
</feature>
<feature type="region of interest" description="Disordered" evidence="2">
    <location>
        <begin position="1"/>
        <end position="97"/>
    </location>
</feature>
<feature type="region of interest" description="Disordered" evidence="2">
    <location>
        <begin position="160"/>
        <end position="187"/>
    </location>
</feature>
<feature type="region of interest" description="Disordered" evidence="2">
    <location>
        <begin position="200"/>
        <end position="232"/>
    </location>
</feature>
<feature type="region of interest" description="Disordered" evidence="2">
    <location>
        <begin position="317"/>
        <end position="339"/>
    </location>
</feature>
<feature type="region of interest" description="Disordered" evidence="2">
    <location>
        <begin position="385"/>
        <end position="412"/>
    </location>
</feature>
<feature type="region of interest" description="Disordered" evidence="2">
    <location>
        <begin position="508"/>
        <end position="532"/>
    </location>
</feature>
<feature type="region of interest" description="Disordered" evidence="2">
    <location>
        <begin position="554"/>
        <end position="718"/>
    </location>
</feature>
<feature type="region of interest" description="Disordered" evidence="2">
    <location>
        <begin position="732"/>
        <end position="812"/>
    </location>
</feature>
<feature type="compositionally biased region" description="Low complexity" evidence="2">
    <location>
        <begin position="14"/>
        <end position="33"/>
    </location>
</feature>
<feature type="compositionally biased region" description="Basic and acidic residues" evidence="2">
    <location>
        <begin position="34"/>
        <end position="44"/>
    </location>
</feature>
<feature type="compositionally biased region" description="Basic and acidic residues" evidence="2">
    <location>
        <begin position="61"/>
        <end position="97"/>
    </location>
</feature>
<feature type="compositionally biased region" description="Basic and acidic residues" evidence="2">
    <location>
        <begin position="172"/>
        <end position="187"/>
    </location>
</feature>
<feature type="compositionally biased region" description="Low complexity" evidence="2">
    <location>
        <begin position="200"/>
        <end position="211"/>
    </location>
</feature>
<feature type="compositionally biased region" description="Basic and acidic residues" evidence="2">
    <location>
        <begin position="317"/>
        <end position="326"/>
    </location>
</feature>
<feature type="compositionally biased region" description="Low complexity" evidence="2">
    <location>
        <begin position="386"/>
        <end position="402"/>
    </location>
</feature>
<feature type="compositionally biased region" description="Basic and acidic residues" evidence="2">
    <location>
        <begin position="554"/>
        <end position="582"/>
    </location>
</feature>
<feature type="compositionally biased region" description="Low complexity" evidence="2">
    <location>
        <begin position="632"/>
        <end position="651"/>
    </location>
</feature>
<feature type="compositionally biased region" description="Low complexity" evidence="2">
    <location>
        <begin position="689"/>
        <end position="701"/>
    </location>
</feature>
<feature type="compositionally biased region" description="Basic and acidic residues" evidence="2">
    <location>
        <begin position="737"/>
        <end position="747"/>
    </location>
</feature>
<feature type="compositionally biased region" description="Low complexity" evidence="2">
    <location>
        <begin position="748"/>
        <end position="763"/>
    </location>
</feature>
<feature type="compositionally biased region" description="Basic and acidic residues" evidence="2">
    <location>
        <begin position="783"/>
        <end position="795"/>
    </location>
</feature>
<feature type="compositionally biased region" description="Polar residues" evidence="2">
    <location>
        <begin position="796"/>
        <end position="812"/>
    </location>
</feature>
<name>SIP5_NEOFI</name>
<accession>A1DB29</accession>
<sequence length="812" mass="87952">MGNSQTKEFRPPLSSSNRRSHQWGSSSSHGRSPYSDRHHAESSRSRGSRPDLSILGIGGSSERDVATLEHRRETKQEREARRLEKERAARVKERERSMREEHVDGGYLVTQGVYVGAEDFNKVVTRQLMIERRLAPFWRGLNDFSESWTEHQLMAAARGLPIPPPDEIPPELEYKNPPKLTEDGKESSIQHLMVPITSRSQSYGSEASQSSTPAHSLPTPVSPIASGTSTSPLFRSRAKTLASLTTSKLGSQIDSTPKEIHLPEDPFVNGQPIEAYLYKDATECPICFLYYPPYLNRTRCCDQPICSECFVQIKRPDPHPPEHGEAEPNATAAEGDRQDNQDCQLVSEPAACPFCVQPEFGVTYTPPPFRRGLVYATDPTLRPNFASPVSSTSSLASANAPPGTGRRRATSLSANDPTVITTDRVRPDWAQKLANARAHAARRSAAATALHTAAYLMNSTASGNESRNFGLGRRGVMRRTGQSETPSASSRSGSPALQALAFLTDRRTPGHETDSAEEGAGNLAPPRNSSRRNRIDDLEEMMMMEAIRLSLASEEERRKKAEKEARKEAKRREKESKKAEKAARKHGFYSNNASSSALDVPSDARLGRVTSSSSSITGEDASPSKGKEVDRASPSATAASSQSSTEIASDSMTINPHPNVVEHGSSAQSLMAQPSAREPPKPSHLRQVSSASSSFSSLVESTGEDHSGAYDGNASSTEPLFNFRSLAAVIGDEDKGDETAEHVEDTSSKPSAEGSASSAAPVADEMLGQSTAPADPIAVGTVAEERDCLMPKELETQSVEITSATRNTEATT</sequence>
<evidence type="ECO:0000250" key="1"/>
<evidence type="ECO:0000256" key="2">
    <source>
        <dbReference type="SAM" id="MobiDB-lite"/>
    </source>
</evidence>
<evidence type="ECO:0000305" key="3"/>
<gene>
    <name type="primary">sip5</name>
    <name type="ORF">NFIA_096910</name>
</gene>
<dbReference type="EMBL" id="DS027694">
    <property type="protein sequence ID" value="EAW20069.1"/>
    <property type="molecule type" value="Genomic_DNA"/>
</dbReference>
<dbReference type="RefSeq" id="XP_001261966.1">
    <property type="nucleotide sequence ID" value="XM_001261965.1"/>
</dbReference>
<dbReference type="SMR" id="A1DB29"/>
<dbReference type="STRING" id="331117.A1DB29"/>
<dbReference type="EnsemblFungi" id="EAW20069">
    <property type="protein sequence ID" value="EAW20069"/>
    <property type="gene ID" value="NFIA_096910"/>
</dbReference>
<dbReference type="GeneID" id="4588529"/>
<dbReference type="KEGG" id="nfi:NFIA_096910"/>
<dbReference type="VEuPathDB" id="FungiDB:NFIA_096910"/>
<dbReference type="eggNOG" id="KOG2789">
    <property type="taxonomic scope" value="Eukaryota"/>
</dbReference>
<dbReference type="HOGENOM" id="CLU_009068_1_0_1"/>
<dbReference type="OMA" id="CFLTYPP"/>
<dbReference type="OrthoDB" id="21471at2759"/>
<dbReference type="Proteomes" id="UP000006702">
    <property type="component" value="Unassembled WGS sequence"/>
</dbReference>
<dbReference type="GO" id="GO:0005737">
    <property type="term" value="C:cytoplasm"/>
    <property type="evidence" value="ECO:0007669"/>
    <property type="project" value="UniProtKB-SubCell"/>
</dbReference>
<dbReference type="CDD" id="cd24139">
    <property type="entry name" value="SIP5-like"/>
    <property type="match status" value="1"/>
</dbReference>
<dbReference type="InterPro" id="IPR039301">
    <property type="entry name" value="Sip5/DA2"/>
</dbReference>
<dbReference type="PANTHER" id="PTHR31315">
    <property type="entry name" value="PROTEIN SIP5"/>
    <property type="match status" value="1"/>
</dbReference>
<dbReference type="PANTHER" id="PTHR31315:SF1">
    <property type="entry name" value="PROTEIN SIP5"/>
    <property type="match status" value="1"/>
</dbReference>
<comment type="function">
    <text evidence="1">May negatively regulate the snf1 kinase.</text>
</comment>
<comment type="subcellular location">
    <subcellularLocation>
        <location evidence="1">Cytoplasm</location>
    </subcellularLocation>
</comment>
<comment type="similarity">
    <text evidence="3">Belongs to the SIP5 family.</text>
</comment>
<proteinExistence type="inferred from homology"/>